<proteinExistence type="inferred from homology"/>
<sequence length="123" mass="13761">MPTINQLIRKKRQSSASRKKSPALQKCPQRRGVCLQVKTKTPKKPNSALRKVAWVRLSNGQEVIAYIGGEGHNLQEHSIVLVQGGRVKDLPGVRYHIVRGALDCAAVKNRKQSRSRYGAKRPK</sequence>
<organism>
    <name type="scientific">Chlamydia abortus (strain DSM 27085 / S26/3)</name>
    <name type="common">Chlamydophila abortus</name>
    <dbReference type="NCBI Taxonomy" id="218497"/>
    <lineage>
        <taxon>Bacteria</taxon>
        <taxon>Pseudomonadati</taxon>
        <taxon>Chlamydiota</taxon>
        <taxon>Chlamydiia</taxon>
        <taxon>Chlamydiales</taxon>
        <taxon>Chlamydiaceae</taxon>
        <taxon>Chlamydia/Chlamydophila group</taxon>
        <taxon>Chlamydia</taxon>
    </lineage>
</organism>
<gene>
    <name evidence="2" type="primary">rpsL</name>
    <name type="ordered locus">CAB186</name>
</gene>
<dbReference type="EMBL" id="CR848038">
    <property type="protein sequence ID" value="CAH63644.1"/>
    <property type="molecule type" value="Genomic_DNA"/>
</dbReference>
<dbReference type="RefSeq" id="WP_006342868.1">
    <property type="nucleotide sequence ID" value="NC_004552.2"/>
</dbReference>
<dbReference type="SMR" id="Q5L6S7"/>
<dbReference type="GeneID" id="93024742"/>
<dbReference type="KEGG" id="cab:CAB186"/>
<dbReference type="eggNOG" id="COG0048">
    <property type="taxonomic scope" value="Bacteria"/>
</dbReference>
<dbReference type="HOGENOM" id="CLU_104295_1_2_0"/>
<dbReference type="OrthoDB" id="9802366at2"/>
<dbReference type="Proteomes" id="UP000001012">
    <property type="component" value="Chromosome"/>
</dbReference>
<dbReference type="GO" id="GO:0015935">
    <property type="term" value="C:small ribosomal subunit"/>
    <property type="evidence" value="ECO:0007669"/>
    <property type="project" value="InterPro"/>
</dbReference>
<dbReference type="GO" id="GO:0019843">
    <property type="term" value="F:rRNA binding"/>
    <property type="evidence" value="ECO:0007669"/>
    <property type="project" value="UniProtKB-UniRule"/>
</dbReference>
<dbReference type="GO" id="GO:0003735">
    <property type="term" value="F:structural constituent of ribosome"/>
    <property type="evidence" value="ECO:0007669"/>
    <property type="project" value="InterPro"/>
</dbReference>
<dbReference type="GO" id="GO:0000049">
    <property type="term" value="F:tRNA binding"/>
    <property type="evidence" value="ECO:0007669"/>
    <property type="project" value="UniProtKB-UniRule"/>
</dbReference>
<dbReference type="GO" id="GO:0006412">
    <property type="term" value="P:translation"/>
    <property type="evidence" value="ECO:0007669"/>
    <property type="project" value="UniProtKB-UniRule"/>
</dbReference>
<dbReference type="CDD" id="cd03368">
    <property type="entry name" value="Ribosomal_S12"/>
    <property type="match status" value="1"/>
</dbReference>
<dbReference type="FunFam" id="2.40.50.140:FF:000001">
    <property type="entry name" value="30S ribosomal protein S12"/>
    <property type="match status" value="1"/>
</dbReference>
<dbReference type="Gene3D" id="2.40.50.140">
    <property type="entry name" value="Nucleic acid-binding proteins"/>
    <property type="match status" value="1"/>
</dbReference>
<dbReference type="HAMAP" id="MF_00403_B">
    <property type="entry name" value="Ribosomal_uS12_B"/>
    <property type="match status" value="1"/>
</dbReference>
<dbReference type="InterPro" id="IPR012340">
    <property type="entry name" value="NA-bd_OB-fold"/>
</dbReference>
<dbReference type="InterPro" id="IPR006032">
    <property type="entry name" value="Ribosomal_uS12"/>
</dbReference>
<dbReference type="InterPro" id="IPR005679">
    <property type="entry name" value="Ribosomal_uS12_bac"/>
</dbReference>
<dbReference type="NCBIfam" id="TIGR00981">
    <property type="entry name" value="rpsL_bact"/>
    <property type="match status" value="1"/>
</dbReference>
<dbReference type="PANTHER" id="PTHR11652">
    <property type="entry name" value="30S RIBOSOMAL PROTEIN S12 FAMILY MEMBER"/>
    <property type="match status" value="1"/>
</dbReference>
<dbReference type="Pfam" id="PF00164">
    <property type="entry name" value="Ribosom_S12_S23"/>
    <property type="match status" value="1"/>
</dbReference>
<dbReference type="PIRSF" id="PIRSF002133">
    <property type="entry name" value="Ribosomal_S12/S23"/>
    <property type="match status" value="1"/>
</dbReference>
<dbReference type="PRINTS" id="PR01034">
    <property type="entry name" value="RIBOSOMALS12"/>
</dbReference>
<dbReference type="SUPFAM" id="SSF50249">
    <property type="entry name" value="Nucleic acid-binding proteins"/>
    <property type="match status" value="1"/>
</dbReference>
<dbReference type="PROSITE" id="PS00055">
    <property type="entry name" value="RIBOSOMAL_S12"/>
    <property type="match status" value="1"/>
</dbReference>
<protein>
    <recommendedName>
        <fullName evidence="2">Small ribosomal subunit protein uS12</fullName>
    </recommendedName>
    <alternativeName>
        <fullName evidence="4">30S ribosomal protein S12</fullName>
    </alternativeName>
</protein>
<feature type="chain" id="PRO_0000226383" description="Small ribosomal subunit protein uS12">
    <location>
        <begin position="1"/>
        <end position="123"/>
    </location>
</feature>
<feature type="region of interest" description="Disordered" evidence="3">
    <location>
        <begin position="1"/>
        <end position="29"/>
    </location>
</feature>
<feature type="compositionally biased region" description="Basic residues" evidence="3">
    <location>
        <begin position="8"/>
        <end position="21"/>
    </location>
</feature>
<feature type="modified residue" description="3-methylthioaspartic acid" evidence="1">
    <location>
        <position position="89"/>
    </location>
</feature>
<evidence type="ECO:0000250" key="1"/>
<evidence type="ECO:0000255" key="2">
    <source>
        <dbReference type="HAMAP-Rule" id="MF_00403"/>
    </source>
</evidence>
<evidence type="ECO:0000256" key="3">
    <source>
        <dbReference type="SAM" id="MobiDB-lite"/>
    </source>
</evidence>
<evidence type="ECO:0000305" key="4"/>
<comment type="function">
    <text evidence="2">With S4 and S5 plays an important role in translational accuracy.</text>
</comment>
<comment type="function">
    <text evidence="2">Interacts with and stabilizes bases of the 16S rRNA that are involved in tRNA selection in the A site and with the mRNA backbone. Located at the interface of the 30S and 50S subunits, it traverses the body of the 30S subunit contacting proteins on the other side and probably holding the rRNA structure together. The combined cluster of proteins S8, S12 and S17 appears to hold together the shoulder and platform of the 30S subunit.</text>
</comment>
<comment type="subunit">
    <text evidence="2">Part of the 30S ribosomal subunit. Contacts proteins S8 and S17. May interact with IF1 in the 30S initiation complex.</text>
</comment>
<comment type="similarity">
    <text evidence="2">Belongs to the universal ribosomal protein uS12 family.</text>
</comment>
<name>RS12_CHLAB</name>
<keyword id="KW-0488">Methylation</keyword>
<keyword id="KW-0687">Ribonucleoprotein</keyword>
<keyword id="KW-0689">Ribosomal protein</keyword>
<keyword id="KW-0694">RNA-binding</keyword>
<keyword id="KW-0699">rRNA-binding</keyword>
<keyword id="KW-0820">tRNA-binding</keyword>
<reference key="1">
    <citation type="journal article" date="2005" name="Genome Res.">
        <title>The Chlamydophila abortus genome sequence reveals an array of variable proteins that contribute to interspecies variation.</title>
        <authorList>
            <person name="Thomson N.R."/>
            <person name="Yeats C."/>
            <person name="Bell K."/>
            <person name="Holden M.T.G."/>
            <person name="Bentley S.D."/>
            <person name="Livingstone M."/>
            <person name="Cerdeno-Tarraga A.-M."/>
            <person name="Harris B."/>
            <person name="Doggett J."/>
            <person name="Ormond D."/>
            <person name="Mungall K."/>
            <person name="Clarke K."/>
            <person name="Feltwell T."/>
            <person name="Hance Z."/>
            <person name="Sanders M."/>
            <person name="Quail M.A."/>
            <person name="Price C."/>
            <person name="Barrell B.G."/>
            <person name="Parkhill J."/>
            <person name="Longbottom D."/>
        </authorList>
    </citation>
    <scope>NUCLEOTIDE SEQUENCE [LARGE SCALE GENOMIC DNA]</scope>
    <source>
        <strain>DSM 27085 / S26/3</strain>
    </source>
</reference>
<accession>Q5L6S7</accession>